<keyword id="KW-1015">Disulfide bond</keyword>
<keyword id="KW-0325">Glycoprotein</keyword>
<keyword id="KW-0372">Hormone</keyword>
<keyword id="KW-1185">Reference proteome</keyword>
<keyword id="KW-0964">Secreted</keyword>
<keyword id="KW-0732">Signal</keyword>
<proteinExistence type="evidence at transcript level"/>
<comment type="function">
    <text evidence="2">Shared alpha chain of the active heterodimeric glycoprotein hormones thyrotropin/thyroid stimulating hormone/TSH, lutropin/luteinizing hormone/LH, follitropin/follicle stimulating hormone/FSH and choriogonadotropin/CG. These hormones bind specific receptors on target cells that in turn activate downstream signaling pathways.</text>
</comment>
<comment type="subunit">
    <text evidence="2">Heterodimer. The active hormones thyrotropin, lutropin, follitropin and choriogonadotropin are heterodimers composed of CGA, a common alpha chain described here and a unique beta chain which confers their biological specificity to the hormones: TSHB for thyrotropin, LHB for lutropin, FSHB for follitropin and choriogonadotropin subunit beta/CGB for choriogonadotropin.</text>
</comment>
<comment type="subcellular location">
    <subcellularLocation>
        <location evidence="2">Secreted</location>
    </subcellularLocation>
</comment>
<comment type="similarity">
    <text evidence="3">Belongs to the glycoprotein hormones subunit alpha family.</text>
</comment>
<name>GLHA_CALJA</name>
<feature type="signal peptide" evidence="1">
    <location>
        <begin position="1"/>
        <end position="24"/>
    </location>
</feature>
<feature type="chain" id="PRO_0000011634" description="Glycoprotein hormones alpha chain">
    <location>
        <begin position="25"/>
        <end position="120"/>
    </location>
</feature>
<feature type="glycosylation site" description="N-linked (GlcNAc...) asparagine" evidence="2">
    <location>
        <position position="80"/>
    </location>
</feature>
<feature type="glycosylation site" description="N-linked (GlcNAc...) asparagine" evidence="2">
    <location>
        <position position="106"/>
    </location>
</feature>
<feature type="disulfide bond" evidence="2">
    <location>
        <begin position="35"/>
        <end position="59"/>
    </location>
</feature>
<feature type="disulfide bond" evidence="2">
    <location>
        <begin position="38"/>
        <end position="88"/>
    </location>
</feature>
<feature type="disulfide bond" evidence="2">
    <location>
        <begin position="56"/>
        <end position="110"/>
    </location>
</feature>
<feature type="disulfide bond" evidence="2">
    <location>
        <begin position="60"/>
        <end position="112"/>
    </location>
</feature>
<feature type="disulfide bond" evidence="2">
    <location>
        <begin position="87"/>
        <end position="115"/>
    </location>
</feature>
<sequence>MDYYRKYAAIILITLSVFLHILHSLPDGEFTAEECPECKLKENKYFSRLGSPIYQCMGCCFSRAYPTPLRSQKTMLVPKNVTSESTCCVAKAYTKATVMGNIRVENHTECHCSTCYHHKF</sequence>
<dbReference type="EMBL" id="U04446">
    <property type="protein sequence ID" value="AAC00030.1"/>
    <property type="molecule type" value="mRNA"/>
</dbReference>
<dbReference type="PIR" id="G00021">
    <property type="entry name" value="G00021"/>
</dbReference>
<dbReference type="RefSeq" id="NP_001254689.1">
    <property type="nucleotide sequence ID" value="NM_001267760.1"/>
</dbReference>
<dbReference type="SMR" id="P51499"/>
<dbReference type="FunCoup" id="P51499">
    <property type="interactions" value="620"/>
</dbReference>
<dbReference type="STRING" id="9483.ENSCJAP00000001086"/>
<dbReference type="GlyCosmos" id="P51499">
    <property type="glycosylation" value="2 sites, No reported glycans"/>
</dbReference>
<dbReference type="GeneID" id="100389264"/>
<dbReference type="KEGG" id="cjc:100389264"/>
<dbReference type="CTD" id="1081"/>
<dbReference type="eggNOG" id="ENOG502S1PK">
    <property type="taxonomic scope" value="Eukaryota"/>
</dbReference>
<dbReference type="InParanoid" id="P51499"/>
<dbReference type="OrthoDB" id="9852859at2759"/>
<dbReference type="Proteomes" id="UP000008225">
    <property type="component" value="Unplaced"/>
</dbReference>
<dbReference type="GO" id="GO:0005615">
    <property type="term" value="C:extracellular space"/>
    <property type="evidence" value="ECO:0000250"/>
    <property type="project" value="UniProtKB"/>
</dbReference>
<dbReference type="GO" id="GO:0016914">
    <property type="term" value="C:follicle-stimulating hormone complex"/>
    <property type="evidence" value="ECO:0000250"/>
    <property type="project" value="UniProtKB"/>
</dbReference>
<dbReference type="GO" id="GO:0016913">
    <property type="term" value="F:follicle-stimulating hormone activity"/>
    <property type="evidence" value="ECO:0000250"/>
    <property type="project" value="UniProtKB"/>
</dbReference>
<dbReference type="GO" id="GO:0007186">
    <property type="term" value="P:G protein-coupled receptor signaling pathway"/>
    <property type="evidence" value="ECO:0000250"/>
    <property type="project" value="UniProtKB"/>
</dbReference>
<dbReference type="GO" id="GO:0010893">
    <property type="term" value="P:positive regulation of steroid biosynthetic process"/>
    <property type="evidence" value="ECO:0000250"/>
    <property type="project" value="UniProtKB"/>
</dbReference>
<dbReference type="GO" id="GO:0010469">
    <property type="term" value="P:regulation of signaling receptor activity"/>
    <property type="evidence" value="ECO:0000250"/>
    <property type="project" value="UniProtKB"/>
</dbReference>
<dbReference type="GO" id="GO:0006590">
    <property type="term" value="P:thyroid hormone generation"/>
    <property type="evidence" value="ECO:0007669"/>
    <property type="project" value="TreeGrafter"/>
</dbReference>
<dbReference type="FunFam" id="2.10.90.10:FF:000011">
    <property type="entry name" value="Glycoprotein hormones alpha chain"/>
    <property type="match status" value="1"/>
</dbReference>
<dbReference type="Gene3D" id="2.10.90.10">
    <property type="entry name" value="Cystine-knot cytokines"/>
    <property type="match status" value="1"/>
</dbReference>
<dbReference type="InterPro" id="IPR029034">
    <property type="entry name" value="Cystine-knot_cytokine"/>
</dbReference>
<dbReference type="InterPro" id="IPR000476">
    <property type="entry name" value="Glyco_hormone"/>
</dbReference>
<dbReference type="PANTHER" id="PTHR11509">
    <property type="entry name" value="GLYCOPROTEIN HORMONE ALPHA CHAIN"/>
    <property type="match status" value="1"/>
</dbReference>
<dbReference type="PANTHER" id="PTHR11509:SF0">
    <property type="entry name" value="GLYCOPROTEIN HORMONES ALPHA CHAIN"/>
    <property type="match status" value="1"/>
</dbReference>
<dbReference type="Pfam" id="PF00236">
    <property type="entry name" value="Hormone_6"/>
    <property type="match status" value="1"/>
</dbReference>
<dbReference type="PRINTS" id="PR00274">
    <property type="entry name" value="GLYCOHORMONE"/>
</dbReference>
<dbReference type="SMART" id="SM00067">
    <property type="entry name" value="GHA"/>
    <property type="match status" value="1"/>
</dbReference>
<dbReference type="SUPFAM" id="SSF57501">
    <property type="entry name" value="Cystine-knot cytokines"/>
    <property type="match status" value="1"/>
</dbReference>
<dbReference type="PROSITE" id="PS00779">
    <property type="entry name" value="GLYCO_HORMONE_ALPHA_1"/>
    <property type="match status" value="1"/>
</dbReference>
<dbReference type="PROSITE" id="PS00780">
    <property type="entry name" value="GLYCO_HORMONE_ALPHA_2"/>
    <property type="match status" value="1"/>
</dbReference>
<dbReference type="PROSITE" id="PS50277">
    <property type="entry name" value="GLYCO_HORMONE_ALPHA_3"/>
    <property type="match status" value="1"/>
</dbReference>
<reference key="1">
    <citation type="journal article" date="1995" name="Biol. Reprod.">
        <title>Luteinizing hormone/chorionic gonadotropin bioactivity in the common marmoset (Callithrix jacchus) is due to a chorionic gonadotropin molecule with a structure intermediate between human chorionic gonadotropin and human luteinizing hormone.</title>
        <authorList>
            <person name="Simula A.P."/>
            <person name="Amato F."/>
            <person name="Faast R."/>
            <person name="Lopata A."/>
            <person name="Berka J."/>
            <person name="Norman R.J."/>
        </authorList>
    </citation>
    <scope>NUCLEOTIDE SEQUENCE [MRNA]</scope>
    <source>
        <tissue>Placenta</tissue>
    </source>
</reference>
<gene>
    <name type="primary">CGA</name>
</gene>
<organism>
    <name type="scientific">Callithrix jacchus</name>
    <name type="common">White-tufted-ear marmoset</name>
    <dbReference type="NCBI Taxonomy" id="9483"/>
    <lineage>
        <taxon>Eukaryota</taxon>
        <taxon>Metazoa</taxon>
        <taxon>Chordata</taxon>
        <taxon>Craniata</taxon>
        <taxon>Vertebrata</taxon>
        <taxon>Euteleostomi</taxon>
        <taxon>Mammalia</taxon>
        <taxon>Eutheria</taxon>
        <taxon>Euarchontoglires</taxon>
        <taxon>Primates</taxon>
        <taxon>Haplorrhini</taxon>
        <taxon>Platyrrhini</taxon>
        <taxon>Cebidae</taxon>
        <taxon>Callitrichinae</taxon>
        <taxon>Callithrix</taxon>
        <taxon>Callithrix</taxon>
    </lineage>
</organism>
<accession>P51499</accession>
<protein>
    <recommendedName>
        <fullName>Glycoprotein hormones alpha chain</fullName>
    </recommendedName>
    <alternativeName>
        <fullName>Anterior pituitary glycoprotein hormones common subunit alpha</fullName>
    </alternativeName>
    <alternativeName>
        <fullName>Choriogonadotropin alpha chain</fullName>
    </alternativeName>
    <alternativeName>
        <fullName>Chorionic gonadotrophin subunit alpha</fullName>
        <shortName>CG-alpha</shortName>
    </alternativeName>
    <alternativeName>
        <fullName>Follicle-stimulating hormone alpha chain</fullName>
        <shortName>FSH-alpha</shortName>
    </alternativeName>
    <alternativeName>
        <fullName>Follitropin alpha chain</fullName>
    </alternativeName>
    <alternativeName>
        <fullName>Luteinizing hormone alpha chain</fullName>
        <shortName>LSH-alpha</shortName>
    </alternativeName>
    <alternativeName>
        <fullName>Lutropin alpha chain</fullName>
    </alternativeName>
    <alternativeName>
        <fullName>Thyroid-stimulating hormone alpha chain</fullName>
        <shortName>TSH-alpha</shortName>
    </alternativeName>
    <alternativeName>
        <fullName>Thyrotropin alpha chain</fullName>
    </alternativeName>
</protein>
<evidence type="ECO:0000250" key="1"/>
<evidence type="ECO:0000250" key="2">
    <source>
        <dbReference type="UniProtKB" id="P01215"/>
    </source>
</evidence>
<evidence type="ECO:0000305" key="3"/>